<sequence length="376" mass="42939">MYKLLKKSGKARRGEFTTPHGVIQTPVFMNVGTLAAIKGAVSSMDLKEIGCQVELSNTYHLHLRPGDEVVKKMGGLHKFMNWDRPILTDSGGFQVFSLSKIRKIQEEGVYFNSHIDGRKIFMGPEESMRIQSNLASTIAMAFDECVENPAPREYVEKSVERTTRWLHRCKDEMNRLNSLPDTINNKQMLFGINQGGTYEDIRIEHAKTIAKMDLDGYAIGGLAVGESHEDMYRIIDAVVPHLPEDKPIYLMGVGIPSNILEAVDRGVDFFDCVLPARNGRHAHVFTKEGKINLLNAKFELDDRPIDEGCQCPACKHYTRSYIRHLFKAKEMLAMRLCVLHNLYFYNNLMEEIRDAIDGNYFKEYKERKLKEWGGRA</sequence>
<name>TGT_CLOBH</name>
<comment type="function">
    <text evidence="1">Catalyzes the base-exchange of a guanine (G) residue with the queuine precursor 7-aminomethyl-7-deazaguanine (PreQ1) at position 34 (anticodon wobble position) in tRNAs with GU(N) anticodons (tRNA-Asp, -Asn, -His and -Tyr). Catalysis occurs through a double-displacement mechanism. The nucleophile active site attacks the C1' of nucleotide 34 to detach the guanine base from the RNA, forming a covalent enzyme-RNA intermediate. The proton acceptor active site deprotonates the incoming PreQ1, allowing a nucleophilic attack on the C1' of the ribose to form the product. After dissociation, two additional enzymatic reactions on the tRNA convert PreQ1 to queuine (Q), resulting in the hypermodified nucleoside queuosine (7-(((4,5-cis-dihydroxy-2-cyclopenten-1-yl)amino)methyl)-7-deazaguanosine).</text>
</comment>
<comment type="catalytic activity">
    <reaction evidence="1">
        <text>7-aminomethyl-7-carbaguanine + guanosine(34) in tRNA = 7-aminomethyl-7-carbaguanosine(34) in tRNA + guanine</text>
        <dbReference type="Rhea" id="RHEA:24104"/>
        <dbReference type="Rhea" id="RHEA-COMP:10341"/>
        <dbReference type="Rhea" id="RHEA-COMP:10342"/>
        <dbReference type="ChEBI" id="CHEBI:16235"/>
        <dbReference type="ChEBI" id="CHEBI:58703"/>
        <dbReference type="ChEBI" id="CHEBI:74269"/>
        <dbReference type="ChEBI" id="CHEBI:82833"/>
        <dbReference type="EC" id="2.4.2.29"/>
    </reaction>
</comment>
<comment type="cofactor">
    <cofactor evidence="1">
        <name>Zn(2+)</name>
        <dbReference type="ChEBI" id="CHEBI:29105"/>
    </cofactor>
    <text evidence="1">Binds 1 zinc ion per subunit.</text>
</comment>
<comment type="pathway">
    <text evidence="1">tRNA modification; tRNA-queuosine biosynthesis.</text>
</comment>
<comment type="subunit">
    <text evidence="1">Homodimer. Within each dimer, one monomer is responsible for RNA recognition and catalysis, while the other monomer binds to the replacement base PreQ1.</text>
</comment>
<comment type="similarity">
    <text evidence="1">Belongs to the queuine tRNA-ribosyltransferase family.</text>
</comment>
<evidence type="ECO:0000255" key="1">
    <source>
        <dbReference type="HAMAP-Rule" id="MF_00168"/>
    </source>
</evidence>
<organism>
    <name type="scientific">Clostridium botulinum (strain Hall / ATCC 3502 / NCTC 13319 / Type A)</name>
    <dbReference type="NCBI Taxonomy" id="441771"/>
    <lineage>
        <taxon>Bacteria</taxon>
        <taxon>Bacillati</taxon>
        <taxon>Bacillota</taxon>
        <taxon>Clostridia</taxon>
        <taxon>Eubacteriales</taxon>
        <taxon>Clostridiaceae</taxon>
        <taxon>Clostridium</taxon>
    </lineage>
</organism>
<gene>
    <name evidence="1" type="primary">tgt</name>
    <name type="ordered locus">CBO3068</name>
    <name type="ordered locus">CLC_2970</name>
</gene>
<accession>A5I6E9</accession>
<accession>A7G7N2</accession>
<keyword id="KW-0328">Glycosyltransferase</keyword>
<keyword id="KW-0479">Metal-binding</keyword>
<keyword id="KW-0671">Queuosine biosynthesis</keyword>
<keyword id="KW-1185">Reference proteome</keyword>
<keyword id="KW-0808">Transferase</keyword>
<keyword id="KW-0819">tRNA processing</keyword>
<keyword id="KW-0862">Zinc</keyword>
<proteinExistence type="inferred from homology"/>
<dbReference type="EC" id="2.4.2.29" evidence="1"/>
<dbReference type="EMBL" id="CP000727">
    <property type="protein sequence ID" value="ABS37319.1"/>
    <property type="molecule type" value="Genomic_DNA"/>
</dbReference>
<dbReference type="EMBL" id="AM412317">
    <property type="protein sequence ID" value="CAL84631.1"/>
    <property type="molecule type" value="Genomic_DNA"/>
</dbReference>
<dbReference type="RefSeq" id="WP_012048086.1">
    <property type="nucleotide sequence ID" value="NC_009698.1"/>
</dbReference>
<dbReference type="RefSeq" id="YP_001255560.1">
    <property type="nucleotide sequence ID" value="NC_009495.1"/>
</dbReference>
<dbReference type="RefSeq" id="YP_001388797.1">
    <property type="nucleotide sequence ID" value="NC_009698.1"/>
</dbReference>
<dbReference type="SMR" id="A5I6E9"/>
<dbReference type="GeneID" id="5185716"/>
<dbReference type="KEGG" id="cbh:CLC_2970"/>
<dbReference type="KEGG" id="cbo:CBO3068"/>
<dbReference type="PATRIC" id="fig|413999.7.peg.3046"/>
<dbReference type="HOGENOM" id="CLU_022060_0_1_9"/>
<dbReference type="UniPathway" id="UPA00392"/>
<dbReference type="PRO" id="PR:A5I6E9"/>
<dbReference type="Proteomes" id="UP000001986">
    <property type="component" value="Chromosome"/>
</dbReference>
<dbReference type="GO" id="GO:0005737">
    <property type="term" value="C:cytoplasm"/>
    <property type="evidence" value="ECO:0000318"/>
    <property type="project" value="GO_Central"/>
</dbReference>
<dbReference type="GO" id="GO:0005829">
    <property type="term" value="C:cytosol"/>
    <property type="evidence" value="ECO:0000318"/>
    <property type="project" value="GO_Central"/>
</dbReference>
<dbReference type="GO" id="GO:0046872">
    <property type="term" value="F:metal ion binding"/>
    <property type="evidence" value="ECO:0007669"/>
    <property type="project" value="UniProtKB-KW"/>
</dbReference>
<dbReference type="GO" id="GO:0008479">
    <property type="term" value="F:tRNA-guanosine(34) queuine transglycosylase activity"/>
    <property type="evidence" value="ECO:0007669"/>
    <property type="project" value="UniProtKB-UniRule"/>
</dbReference>
<dbReference type="GO" id="GO:0008616">
    <property type="term" value="P:queuosine biosynthetic process"/>
    <property type="evidence" value="ECO:0000318"/>
    <property type="project" value="GO_Central"/>
</dbReference>
<dbReference type="GO" id="GO:0002099">
    <property type="term" value="P:tRNA wobble guanine modification"/>
    <property type="evidence" value="ECO:0000318"/>
    <property type="project" value="GO_Central"/>
</dbReference>
<dbReference type="GO" id="GO:0101030">
    <property type="term" value="P:tRNA-guanine transglycosylation"/>
    <property type="evidence" value="ECO:0007669"/>
    <property type="project" value="InterPro"/>
</dbReference>
<dbReference type="FunFam" id="3.20.20.105:FF:000001">
    <property type="entry name" value="Queuine tRNA-ribosyltransferase"/>
    <property type="match status" value="1"/>
</dbReference>
<dbReference type="Gene3D" id="3.20.20.105">
    <property type="entry name" value="Queuine tRNA-ribosyltransferase-like"/>
    <property type="match status" value="1"/>
</dbReference>
<dbReference type="HAMAP" id="MF_00168">
    <property type="entry name" value="Q_tRNA_Tgt"/>
    <property type="match status" value="1"/>
</dbReference>
<dbReference type="InterPro" id="IPR050076">
    <property type="entry name" value="ArchSynthase1/Queuine_TRR"/>
</dbReference>
<dbReference type="InterPro" id="IPR004803">
    <property type="entry name" value="TGT"/>
</dbReference>
<dbReference type="InterPro" id="IPR036511">
    <property type="entry name" value="TGT-like_sf"/>
</dbReference>
<dbReference type="InterPro" id="IPR002616">
    <property type="entry name" value="tRNA_ribo_trans-like"/>
</dbReference>
<dbReference type="NCBIfam" id="TIGR00430">
    <property type="entry name" value="Q_tRNA_tgt"/>
    <property type="match status" value="1"/>
</dbReference>
<dbReference type="NCBIfam" id="TIGR00449">
    <property type="entry name" value="tgt_general"/>
    <property type="match status" value="1"/>
</dbReference>
<dbReference type="PANTHER" id="PTHR46499">
    <property type="entry name" value="QUEUINE TRNA-RIBOSYLTRANSFERASE"/>
    <property type="match status" value="1"/>
</dbReference>
<dbReference type="PANTHER" id="PTHR46499:SF1">
    <property type="entry name" value="QUEUINE TRNA-RIBOSYLTRANSFERASE"/>
    <property type="match status" value="1"/>
</dbReference>
<dbReference type="Pfam" id="PF01702">
    <property type="entry name" value="TGT"/>
    <property type="match status" value="1"/>
</dbReference>
<dbReference type="SUPFAM" id="SSF51713">
    <property type="entry name" value="tRNA-guanine transglycosylase"/>
    <property type="match status" value="1"/>
</dbReference>
<reference key="1">
    <citation type="journal article" date="2007" name="Genome Res.">
        <title>Genome sequence of a proteolytic (Group I) Clostridium botulinum strain Hall A and comparative analysis of the clostridial genomes.</title>
        <authorList>
            <person name="Sebaihia M."/>
            <person name="Peck M.W."/>
            <person name="Minton N.P."/>
            <person name="Thomson N.R."/>
            <person name="Holden M.T.G."/>
            <person name="Mitchell W.J."/>
            <person name="Carter A.T."/>
            <person name="Bentley S.D."/>
            <person name="Mason D.R."/>
            <person name="Crossman L."/>
            <person name="Paul C.J."/>
            <person name="Ivens A."/>
            <person name="Wells-Bennik M.H.J."/>
            <person name="Davis I.J."/>
            <person name="Cerdeno-Tarraga A.M."/>
            <person name="Churcher C."/>
            <person name="Quail M.A."/>
            <person name="Chillingworth T."/>
            <person name="Feltwell T."/>
            <person name="Fraser A."/>
            <person name="Goodhead I."/>
            <person name="Hance Z."/>
            <person name="Jagels K."/>
            <person name="Larke N."/>
            <person name="Maddison M."/>
            <person name="Moule S."/>
            <person name="Mungall K."/>
            <person name="Norbertczak H."/>
            <person name="Rabbinowitsch E."/>
            <person name="Sanders M."/>
            <person name="Simmonds M."/>
            <person name="White B."/>
            <person name="Whithead S."/>
            <person name="Parkhill J."/>
        </authorList>
    </citation>
    <scope>NUCLEOTIDE SEQUENCE [LARGE SCALE GENOMIC DNA]</scope>
    <source>
        <strain>Hall / ATCC 3502 / NCTC 13319 / Type A</strain>
    </source>
</reference>
<reference key="2">
    <citation type="journal article" date="2007" name="PLoS ONE">
        <title>Analysis of the neurotoxin complex genes in Clostridium botulinum A1-A4 and B1 strains: BoNT/A3, /Ba4 and /B1 clusters are located within plasmids.</title>
        <authorList>
            <person name="Smith T.J."/>
            <person name="Hill K.K."/>
            <person name="Foley B.T."/>
            <person name="Detter J.C."/>
            <person name="Munk A.C."/>
            <person name="Bruce D.C."/>
            <person name="Doggett N.A."/>
            <person name="Smith L.A."/>
            <person name="Marks J.D."/>
            <person name="Xie G."/>
            <person name="Brettin T.S."/>
        </authorList>
    </citation>
    <scope>NUCLEOTIDE SEQUENCE [LARGE SCALE GENOMIC DNA]</scope>
    <source>
        <strain>Hall / ATCC 3502 / NCTC 13319 / Type A</strain>
    </source>
</reference>
<feature type="chain" id="PRO_1000016780" description="Queuine tRNA-ribosyltransferase">
    <location>
        <begin position="1"/>
        <end position="376"/>
    </location>
</feature>
<feature type="region of interest" description="RNA binding" evidence="1">
    <location>
        <begin position="252"/>
        <end position="258"/>
    </location>
</feature>
<feature type="region of interest" description="RNA binding; important for wobble base 34 recognition" evidence="1">
    <location>
        <begin position="276"/>
        <end position="280"/>
    </location>
</feature>
<feature type="active site" description="Proton acceptor" evidence="1">
    <location>
        <position position="89"/>
    </location>
</feature>
<feature type="active site" description="Nucleophile" evidence="1">
    <location>
        <position position="271"/>
    </location>
</feature>
<feature type="binding site" evidence="1">
    <location>
        <begin position="89"/>
        <end position="93"/>
    </location>
    <ligand>
        <name>substrate</name>
    </ligand>
</feature>
<feature type="binding site" evidence="1">
    <location>
        <position position="143"/>
    </location>
    <ligand>
        <name>substrate</name>
    </ligand>
</feature>
<feature type="binding site" evidence="1">
    <location>
        <position position="194"/>
    </location>
    <ligand>
        <name>substrate</name>
    </ligand>
</feature>
<feature type="binding site" evidence="1">
    <location>
        <position position="221"/>
    </location>
    <ligand>
        <name>substrate</name>
    </ligand>
</feature>
<feature type="binding site" evidence="1">
    <location>
        <position position="309"/>
    </location>
    <ligand>
        <name>Zn(2+)</name>
        <dbReference type="ChEBI" id="CHEBI:29105"/>
    </ligand>
</feature>
<feature type="binding site" evidence="1">
    <location>
        <position position="311"/>
    </location>
    <ligand>
        <name>Zn(2+)</name>
        <dbReference type="ChEBI" id="CHEBI:29105"/>
    </ligand>
</feature>
<feature type="binding site" evidence="1">
    <location>
        <position position="314"/>
    </location>
    <ligand>
        <name>Zn(2+)</name>
        <dbReference type="ChEBI" id="CHEBI:29105"/>
    </ligand>
</feature>
<feature type="binding site" evidence="1">
    <location>
        <position position="340"/>
    </location>
    <ligand>
        <name>Zn(2+)</name>
        <dbReference type="ChEBI" id="CHEBI:29105"/>
    </ligand>
</feature>
<protein>
    <recommendedName>
        <fullName evidence="1">Queuine tRNA-ribosyltransferase</fullName>
        <ecNumber evidence="1">2.4.2.29</ecNumber>
    </recommendedName>
    <alternativeName>
        <fullName evidence="1">Guanine insertion enzyme</fullName>
    </alternativeName>
    <alternativeName>
        <fullName evidence="1">tRNA-guanine transglycosylase</fullName>
    </alternativeName>
</protein>